<organism>
    <name type="scientific">Bunodosoma granuliferum</name>
    <name type="common">Red warty sea anemone</name>
    <dbReference type="NCBI Taxonomy" id="31164"/>
    <lineage>
        <taxon>Eukaryota</taxon>
        <taxon>Metazoa</taxon>
        <taxon>Cnidaria</taxon>
        <taxon>Anthozoa</taxon>
        <taxon>Hexacorallia</taxon>
        <taxon>Actiniaria</taxon>
        <taxon>Actiniidae</taxon>
        <taxon>Bunodosoma</taxon>
    </lineage>
</organism>
<evidence type="ECO:0000250" key="1">
    <source>
        <dbReference type="UniProtKB" id="C0HJC2"/>
    </source>
</evidence>
<evidence type="ECO:0000255" key="2">
    <source>
        <dbReference type="PROSITE-ProRule" id="PRU01005"/>
    </source>
</evidence>
<evidence type="ECO:0000269" key="3">
    <source>
    </source>
</evidence>
<evidence type="ECO:0000269" key="4">
    <source>
    </source>
</evidence>
<evidence type="ECO:0000269" key="5">
    <source>
    </source>
</evidence>
<evidence type="ECO:0000269" key="6">
    <source>
    </source>
</evidence>
<evidence type="ECO:0000269" key="7">
    <source>
    </source>
</evidence>
<evidence type="ECO:0000269" key="8">
    <source>
    </source>
</evidence>
<evidence type="ECO:0000269" key="9">
    <source>
    </source>
</evidence>
<evidence type="ECO:0000303" key="10">
    <source>
    </source>
</evidence>
<evidence type="ECO:0000303" key="11">
    <source>
    </source>
</evidence>
<evidence type="ECO:0000303" key="12">
    <source>
    </source>
</evidence>
<evidence type="ECO:0000305" key="13"/>
<evidence type="ECO:0000305" key="14">
    <source>
    </source>
</evidence>
<evidence type="ECO:0000305" key="15">
    <source>
    </source>
</evidence>
<evidence type="ECO:0007829" key="16">
    <source>
        <dbReference type="PDB" id="1BGK"/>
    </source>
</evidence>
<proteinExistence type="evidence at protein level"/>
<name>K1B_BUNGR</name>
<sequence>VCRDWFKETACRHAKSLGNCRTSQKYRANCAKTCELC</sequence>
<protein>
    <recommendedName>
        <fullName evidence="11">Kappa-actitoxin-Bgr1a</fullName>
        <shortName evidence="11">Kappa-AITX-Bgr1a</shortName>
    </recommendedName>
    <alternativeName>
        <fullName evidence="10 12">Potassium channel toxin Bgk</fullName>
    </alternativeName>
</protein>
<dbReference type="PIR" id="S33268">
    <property type="entry name" value="S33268"/>
</dbReference>
<dbReference type="PDB" id="1BGK">
    <property type="method" value="NMR"/>
    <property type="chains" value="A=1-37"/>
</dbReference>
<dbReference type="PDBsum" id="1BGK"/>
<dbReference type="SMR" id="P29186"/>
<dbReference type="TCDB" id="8.B.14.1.1">
    <property type="family name" value="the sea anemone peptide toxin, class 1 (bgk) family"/>
</dbReference>
<dbReference type="EvolutionaryTrace" id="P29186"/>
<dbReference type="GO" id="GO:0005576">
    <property type="term" value="C:extracellular region"/>
    <property type="evidence" value="ECO:0007669"/>
    <property type="project" value="UniProtKB-SubCell"/>
</dbReference>
<dbReference type="GO" id="GO:0042151">
    <property type="term" value="C:nematocyst"/>
    <property type="evidence" value="ECO:0007669"/>
    <property type="project" value="UniProtKB-SubCell"/>
</dbReference>
<dbReference type="GO" id="GO:0015459">
    <property type="term" value="F:potassium channel regulator activity"/>
    <property type="evidence" value="ECO:0007669"/>
    <property type="project" value="UniProtKB-KW"/>
</dbReference>
<dbReference type="GO" id="GO:0090729">
    <property type="term" value="F:toxin activity"/>
    <property type="evidence" value="ECO:0007669"/>
    <property type="project" value="UniProtKB-KW"/>
</dbReference>
<dbReference type="InterPro" id="IPR003582">
    <property type="entry name" value="ShKT_dom"/>
</dbReference>
<dbReference type="Pfam" id="PF01549">
    <property type="entry name" value="ShK"/>
    <property type="match status" value="1"/>
</dbReference>
<dbReference type="SUPFAM" id="SSF57546">
    <property type="entry name" value="Crisp domain-like"/>
    <property type="match status" value="1"/>
</dbReference>
<dbReference type="PROSITE" id="PS51670">
    <property type="entry name" value="SHKT"/>
    <property type="match status" value="1"/>
</dbReference>
<comment type="function">
    <text evidence="3 4 5 7">Inhibits voltage-dependent potassium channels of the Kv1 family (Kv1.1/KCNA1 (Kd=6 nM), Kv1.2/KCNA2 (Kd=15 nM), Kv1.3/KCNA3 (Kd=10-39 nM), Kv1.6/KCNA6, and KCa3.1/KCNN4 (Kd=172 nM)).</text>
</comment>
<comment type="subcellular location">
    <subcellularLocation>
        <location evidence="1">Secreted</location>
    </subcellularLocation>
    <subcellularLocation>
        <location evidence="1">Nematocyst</location>
    </subcellularLocation>
</comment>
<comment type="mass spectrometry"/>
<comment type="mass spectrometry">
    <text>Monoisotopic mass.</text>
</comment>
<comment type="toxic dose">
    <text evidence="9">LD(50) is 4.5 ug/kg by intracerebroventricular injection into mice. Symptoms observed are trembling of tail, fasciculations, salivation, paralysis and death.</text>
</comment>
<comment type="miscellaneous">
    <text evidence="6">Negative results: does not act on Kv3.1 up to 125 nM of the toxin (PubMed:9063464). Does not show effect on crabs.</text>
</comment>
<comment type="similarity">
    <text evidence="13">Belongs to the sea anemone type 1 potassium channel toxin family. Type 1b subfamily.</text>
</comment>
<keyword id="KW-0002">3D-structure</keyword>
<keyword id="KW-0903">Direct protein sequencing</keyword>
<keyword id="KW-1015">Disulfide bond</keyword>
<keyword id="KW-0872">Ion channel impairing toxin</keyword>
<keyword id="KW-0166">Nematocyst</keyword>
<keyword id="KW-0528">Neurotoxin</keyword>
<keyword id="KW-0632">Potassium channel impairing toxin</keyword>
<keyword id="KW-0964">Secreted</keyword>
<keyword id="KW-0800">Toxin</keyword>
<keyword id="KW-1220">Voltage-gated potassium channel impairing toxin</keyword>
<reference key="1">
    <citation type="journal article" date="1993" name="Biochim. Biophys. Acta">
        <title>A potassium channel toxin from the secretion of the sea anemone Bunodosoma granulifera. Isolation, amino acid sequence and biological activity.</title>
        <authorList>
            <person name="Aneiros A."/>
            <person name="Garcia I."/>
            <person name="Martinez J.R."/>
            <person name="Harvey A.L."/>
            <person name="Anderson A.J."/>
            <person name="Marshall D.L."/>
            <person name="Engstroem A."/>
            <person name="Hellman U."/>
            <person name="Karlsson E."/>
        </authorList>
    </citation>
    <scope>PROTEIN SEQUENCE</scope>
    <scope>FUNCTION</scope>
    <scope>MASS SPECTROMETRY</scope>
    <source>
        <tissue>Nematoblast</tissue>
    </source>
</reference>
<reference key="2">
    <citation type="journal article" date="1997" name="Eur. J. Biochem.">
        <title>A potassium-channel toxin from the sea anemone Bunodosoma granulifera, an inhibitor for Kv1 channels. Revision of the amino acid sequence, disulfide-bridge assignment, chemical synthesis, and biological activity.</title>
        <authorList>
            <person name="Cotton J."/>
            <person name="Crest M."/>
            <person name="Bouet F."/>
            <person name="Alessandri N."/>
            <person name="Gola M."/>
            <person name="Forest E."/>
            <person name="Karlsson E."/>
            <person name="Castaneda O."/>
            <person name="Harvey A.L."/>
            <person name="Vita C."/>
            <person name="Menez A."/>
        </authorList>
    </citation>
    <scope>PROTEIN SEQUENCE</scope>
    <scope>SEQUENCE REVISION TO 34-36</scope>
    <scope>DISULFIDE BONDS</scope>
    <scope>FUNCTION</scope>
    <scope>TOXIC DOSE</scope>
</reference>
<reference key="3">
    <citation type="journal article" date="1999" name="J. Biol. Chem.">
        <title>Structural conservation of the pores of calcium-activated and voltage-gated potassium channels determined by a sea anemone toxin.</title>
        <authorList>
            <person name="Rauer H."/>
            <person name="Pennington M."/>
            <person name="Cahalan M."/>
            <person name="Chandy K.G."/>
        </authorList>
    </citation>
    <scope>FUNCTION</scope>
</reference>
<reference key="4">
    <citation type="journal article" date="1999" name="J. Biol. Chem.">
        <title>Mapping the functional anatomy of BgK on Kv1.1, Kv1.2, and Kv1.3. Clues to design analogs with enhanced selectivity.</title>
        <authorList>
            <person name="Alessandri-Haber N."/>
            <person name="Lecoq A."/>
            <person name="Gasparini S."/>
            <person name="Grangier-Macmath G."/>
            <person name="Jacquet G."/>
            <person name="Harvey A.L."/>
            <person name="de Medeiros C."/>
            <person name="Rowan E.G."/>
            <person name="Gola M."/>
            <person name="Menez A."/>
            <person name="Crest M."/>
        </authorList>
    </citation>
    <scope>FUNCTION</scope>
    <scope>MUTAGENESIS OF VAL-1; ARG-3; ASP-4; TRP-5; PHE-6; LYS-7; GLU-8; THR-9; ARG-12; HIS-13; LYS-15; SER-16; LEU-17; ASN-19; ARG-21; THR-22; SER-23; GLN-24; LYS-25; TYR-26; ARG-27; ASN-29; LYS-32; THR-33; GLU-35 AND LEU-36</scope>
</reference>
<reference key="5">
    <citation type="journal article" date="2002" name="J. Biol. Chem.">
        <title>Characterization of a novel radiolabeled peptide selective for a subpopulation of voltage-gated potassium channels in mammalian brain.</title>
        <authorList>
            <person name="Racape J."/>
            <person name="Lecoq A."/>
            <person name="Romi-Lebrun R."/>
            <person name="Liu J."/>
            <person name="Kohler M."/>
            <person name="Garcia M.L."/>
            <person name="Menez A."/>
            <person name="Gasparini S."/>
        </authorList>
    </citation>
    <scope>FUNCTION</scope>
    <scope>MUTAGENESIS OF TRP-5; PHE-6 AND TYR-26</scope>
</reference>
<reference key="6">
    <citation type="journal article" date="2012" name="Peptides">
        <title>Peptide fingerprinting of the neurotoxic fractions isolated from the secretions of sea anemones Stichodactyla helianthus and Bunodosoma granulifera. New members of the APETx-like family identified by a 454 pyrosequencing approach.</title>
        <authorList>
            <person name="Rodriguez A.A."/>
            <person name="Cassoli J.S."/>
            <person name="Sa F."/>
            <person name="Dong Z.Q."/>
            <person name="de Freitas J.C."/>
            <person name="Pimenta A.M."/>
            <person name="de Lima M.E."/>
            <person name="Konno K."/>
            <person name="Lee S.M."/>
            <person name="Garateix A."/>
            <person name="Zaharenko A.J."/>
        </authorList>
    </citation>
    <scope>MASS SPECTROMETRY</scope>
</reference>
<reference key="7">
    <citation type="journal article" date="2012" name="Toxicon">
        <title>Development of a rational nomenclature for naming peptide and protein toxins from sea anemones.</title>
        <authorList>
            <person name="Oliveira J.S."/>
            <person name="Fuentes-Silva D."/>
            <person name="King G.F."/>
        </authorList>
    </citation>
    <scope>NOMENCLATURE</scope>
</reference>
<reference key="8">
    <citation type="journal article" date="1997" name="J. Biol. Chem.">
        <title>On the convergent evolution of animal toxins. Conservation of a diad of functional residues in potassium channel-blocking toxins with unrelated structures.</title>
        <authorList>
            <person name="Dauplais M."/>
            <person name="Lecoq A."/>
            <person name="Song J."/>
            <person name="Cotton J."/>
            <person name="Jamin N."/>
            <person name="Gilquin B."/>
            <person name="Roumestand C."/>
            <person name="Vita C."/>
            <person name="de Medeiros C.L.C."/>
            <person name="Rowan E.G."/>
            <person name="Harvey A.L."/>
            <person name="Menez A."/>
        </authorList>
    </citation>
    <scope>STRUCTURE BY NMR</scope>
    <scope>DISULFIDE BONDS</scope>
    <scope>MUTAGENESIS OF PHE-6; HIS-13; SER-23; LYS-25 AND TYR-26</scope>
</reference>
<feature type="peptide" id="PRO_0000044864" description="Kappa-actitoxin-Bgr1a" evidence="7">
    <location>
        <begin position="1"/>
        <end position="37"/>
    </location>
</feature>
<feature type="domain" description="ShKT" evidence="2">
    <location>
        <begin position="2"/>
        <end position="37"/>
    </location>
</feature>
<feature type="region of interest" description="Crucial for binding to potassium channels" evidence="4 8">
    <location>
        <begin position="25"/>
        <end position="26"/>
    </location>
</feature>
<feature type="site" description="Key residue for binding Kv1.2 and Kv1.3" evidence="14 15">
    <location>
        <position position="6"/>
    </location>
</feature>
<feature type="site" description="Key residue for binding Kv1.3" evidence="14">
    <location>
        <position position="7"/>
    </location>
</feature>
<feature type="site" description="Important for binding Kv1.2" evidence="14">
    <location>
        <position position="12"/>
    </location>
</feature>
<feature type="site" description="Important for binding Kv1.2 and Kv1.3" evidence="14 15">
    <location>
        <position position="13"/>
    </location>
</feature>
<feature type="site" description="Important for binding Kv1.3" evidence="14">
    <location>
        <position position="17"/>
    </location>
</feature>
<feature type="site" description="Key residue for binding Kv1.1 and Kv1.3" evidence="14">
    <location>
        <position position="19"/>
    </location>
</feature>
<feature type="site" description="Important for binding Kv1.3" evidence="14">
    <location>
        <position position="22"/>
    </location>
</feature>
<feature type="site" description="Key residue for binding Kv1.1, Kv1.2 and Kv1.3" evidence="14 15">
    <location>
        <position position="23"/>
    </location>
</feature>
<feature type="site" description="Important for binding Kv1.1 and key residue for binding Kv1.3" evidence="14">
    <location>
        <position position="24"/>
    </location>
</feature>
<feature type="site" description="Key residue for binding Kv1.1, Kv1.2 and Kv1.3" evidence="14 15">
    <location>
        <position position="25"/>
    </location>
</feature>
<feature type="site" description="Important for binding Kv1.1, Kv1.2 and key residue for binding Kv1.3" evidence="14 15">
    <location>
        <position position="26"/>
    </location>
</feature>
<feature type="site" description="Important for binding Kv1.3" evidence="14">
    <location>
        <position position="27"/>
    </location>
</feature>
<feature type="disulfide bond" evidence="8 9">
    <location>
        <begin position="2"/>
        <end position="37"/>
    </location>
</feature>
<feature type="disulfide bond" evidence="8 9">
    <location>
        <begin position="11"/>
        <end position="30"/>
    </location>
</feature>
<feature type="disulfide bond" evidence="8 9">
    <location>
        <begin position="20"/>
        <end position="34"/>
    </location>
</feature>
<feature type="mutagenesis site" description="No change in affinity on Kv1.1 and on Kv1.3. Small increase in affinity on Kv1.2." evidence="4">
    <original>V</original>
    <variation>A</variation>
    <location>
        <position position="1"/>
    </location>
</feature>
<feature type="mutagenesis site" description="Small decrease in affinity on Kv1.1, Kv1.2 and Kv1.3." evidence="4">
    <original>R</original>
    <variation>A</variation>
    <location>
        <position position="3"/>
    </location>
</feature>
<feature type="mutagenesis site" description="Is not properly oxidized." evidence="4">
    <original>D</original>
    <variation>A</variation>
    <location>
        <position position="4"/>
    </location>
</feature>
<feature type="mutagenesis site" description="Small decrease in affinity on Kv1.1 and on Kv1.2. No change in affinity on Kv1.3." evidence="4">
    <original>W</original>
    <variation>A</variation>
    <location>
        <position position="5"/>
    </location>
</feature>
<feature type="mutagenesis site" description="No change in affinity on Kv1.1, Kv1.2 and Kv1.6; when associated with F-26. Important decrease in affinity on Kv1.2, and no change in affinity on Kv1.1 and Kv1.6; when associated with A-6 and F-26." evidence="5">
    <original>W</original>
    <variation>Y</variation>
    <location>
        <position position="5"/>
    </location>
</feature>
<feature type="mutagenesis site" description="No change in affinity on Kv1.1. &gt;500-fold decrease in affinity on Kv1.2. 20-100-fold decrease in affinity on Kv1.3. 46-fold decrease in ability to compete with alpha-dendrotoxin. Important decrease in affinity on Kv1.2, and no change in affinity on Kv1.1 and Kv1.6; when associated with Y-5 and F-26." evidence="4 5 8">
    <original>F</original>
    <variation>A</variation>
    <location>
        <position position="6"/>
    </location>
</feature>
<feature type="mutagenesis site" description="Small decrease in affinity on Kv1.1 and on Kv1.2. 20-100-fold decrease in affinity on Kv1.3." evidence="4">
    <original>K</original>
    <variation>A</variation>
    <location>
        <position position="7"/>
    </location>
</feature>
<feature type="mutagenesis site" description="No change in affinity on Kv1.1. Small increase in affinity on Kv1.2. Small decrease in affinity on Kv1.3." evidence="4">
    <original>E</original>
    <variation>A</variation>
    <location>
        <position position="8"/>
    </location>
</feature>
<feature type="mutagenesis site" description="Small decrease in affinity on Kv1.1 and on Kv1.3. Small increase in affinity on Kv1.2." evidence="4">
    <original>T</original>
    <variation>A</variation>
    <location>
        <position position="9"/>
    </location>
</feature>
<feature type="mutagenesis site" description="Small decrease in affinity on Kv1.1 and on Kv1.3. 5-20-fold decrease in affinity on Kv1.2." evidence="4">
    <original>R</original>
    <variation>A</variation>
    <location>
        <position position="12"/>
    </location>
</feature>
<feature type="mutagenesis site" description="Small decrease in affinity on Kv1.1. 5-20-fold decrease in affinity on Kv1.2 and on Kv1.3. 5.6-fold decrease in ability to compete with alpha-dendrotoxin." evidence="4 8">
    <original>H</original>
    <variation>A</variation>
    <location>
        <position position="13"/>
    </location>
</feature>
<feature type="mutagenesis site" description="Small decrease in affinity on Kv1.1, Kv1.2 and Kv1.3." evidence="4">
    <original>K</original>
    <variation>A</variation>
    <location>
        <position position="15"/>
    </location>
</feature>
<feature type="mutagenesis site" description="Small decrease in affinity on Kv1.1 and on Kv1.3. No change in affinity on Kv1.2." evidence="4">
    <original>S</original>
    <variation>A</variation>
    <location>
        <position position="16"/>
    </location>
</feature>
<feature type="mutagenesis site" description="Small decrease in affinity on Kv1.1. No change in affinity on Kv1.2. 5-20-fold decrease in affinity on Kv1.3." evidence="4">
    <original>L</original>
    <variation>A</variation>
    <location>
        <position position="17"/>
    </location>
</feature>
<feature type="mutagenesis site" description="20-fold decrease in affinity on Kv1.1. Small decrease in affinity on Kv1.2. 20-100-fold decrease in affinity on Kv1.3." evidence="4">
    <original>N</original>
    <variation>A</variation>
    <location>
        <position position="19"/>
    </location>
</feature>
<feature type="mutagenesis site" description="Small decrease in affinity on Kv1.1, Kv1.2 and Kv1.3." evidence="4">
    <original>R</original>
    <variation>A</variation>
    <location>
        <position position="21"/>
    </location>
</feature>
<feature type="mutagenesis site" description="Small decrease in affinity on Kv1.1. Small increase in affinity on Kv1.2. 5-20-fold decrease in affinity on Kv1.3." evidence="4">
    <original>T</original>
    <variation>A</variation>
    <location>
        <position position="22"/>
    </location>
</feature>
<feature type="mutagenesis site" description="5-20-fold decrease in affinity on Kv1.1 and on Kv1.2. 20-100-fold decrease in affinity on Kv1.3. 8.3-fold decrease in ability to compete with alpha-dendrotoxin." evidence="4 8">
    <original>S</original>
    <variation>A</variation>
    <location>
        <position position="23"/>
    </location>
</feature>
<feature type="mutagenesis site" description="5-20-fold decrease in affinity on Kv1.1. No change in affinity on Kv1.2. 20-100-fold decrease in affinity on Kv1.3." evidence="4">
    <original>Q</original>
    <variation>A</variation>
    <location>
        <position position="24"/>
    </location>
</feature>
<feature type="mutagenesis site" description="60-fold decrease in affinity on Kv1.1. &gt;500-fold decrease in affinity on Kv1.2. 20-100-fold decrease in affinity on Kv1.3. &gt;80-fold decrease in ability to compete with alpha-dendrotoxin. 214-fold decrease in affinity on Kv1.1, 23000-fold affinity decrease on Kv1.2 and 1580-fold decrease in affinity on Kv1.3; when associated with A-26." evidence="4 8">
    <original>K</original>
    <variation>A</variation>
    <location>
        <position position="25"/>
    </location>
</feature>
<feature type="mutagenesis site" description="20-fold decrease in affinity on Kv1.1. &gt;20-fold decrease in affinity on Kv1.2. 20-100-fold decrease in affinity on Kv1.3. 28-fold decrease in ability to compete with alpha-dendrotoxin. 214-fold decrease in affinity on Kv1.1, 23000-fold affinity decrease on Kv1.2 and 1580-fold decrease in affinity on Kv1.3; when associated with A-25." evidence="4 8">
    <original>Y</original>
    <variation>A</variation>
    <location>
        <position position="26"/>
    </location>
</feature>
<feature type="mutagenesis site" description="No change in affinity on Kv1.1, Kv1.2 and Kv1.6; when associated with Y-5. Important decrease in affinity on Kv1.2, and no change in affinity on Kv1.1 and Kv1.6; when associated with Y-5 and A-6." evidence="5">
    <original>Y</original>
    <variation>F</variation>
    <location>
        <position position="26"/>
    </location>
</feature>
<feature type="mutagenesis site" description="Small decrease in affinity on Kv1.1 and on Kv1.2. 5-20-fold decrease in affinity on Kv1.3." evidence="4">
    <original>R</original>
    <variation>A</variation>
    <location>
        <position position="27"/>
    </location>
</feature>
<feature type="mutagenesis site" description="Shows distorsions in the dichroic spectrum. 5-20-fold decrease in affinity on Kv1.1 and on Kv1.3. Small decrease in affinity on Kv1.2." evidence="4">
    <original>N</original>
    <variation>A</variation>
    <location>
        <position position="29"/>
    </location>
</feature>
<feature type="mutagenesis site" description="Shows distorsions in the dichroic spectrum. Small decrease in affinity on Kv1.1 and on Kv1.3. No change in affinity on Kv1.2." evidence="4">
    <original>K</original>
    <variation>A</variation>
    <location>
        <position position="32"/>
    </location>
</feature>
<feature type="mutagenesis site" description="Shows distorsions in the dichroic spectrum. No change in affinity on Kv1.1. Small decrease in affinity on Kv1.2 and on Kv1.3." evidence="4">
    <original>T</original>
    <variation>A</variation>
    <location>
        <position position="33"/>
    </location>
</feature>
<feature type="mutagenesis site" description="Shows distorsions in the dichroic spectrum. No change in affinity on Kv1.1 and on Kv1.3. Small increase in affinity on Kv1.2." evidence="4">
    <original>E</original>
    <variation>A</variation>
    <location>
        <position position="35"/>
    </location>
</feature>
<feature type="mutagenesis site" description="Shows distorsions in the dichroic spectrum. Small decrease in affinity on Kv1.1 and on Kv1.2. 5-20-fold decrease in affinity on Kv1.3." evidence="4">
    <original>L</original>
    <variation>A</variation>
    <location>
        <position position="36"/>
    </location>
</feature>
<feature type="helix" evidence="16">
    <location>
        <begin position="8"/>
        <end position="17"/>
    </location>
</feature>
<feature type="turn" evidence="16">
    <location>
        <begin position="19"/>
        <end position="22"/>
    </location>
</feature>
<feature type="helix" evidence="16">
    <location>
        <begin position="24"/>
        <end position="27"/>
    </location>
</feature>
<feature type="turn" evidence="16">
    <location>
        <begin position="28"/>
        <end position="35"/>
    </location>
</feature>
<accession>P29186</accession>